<comment type="function">
    <text evidence="1">Catalyzes the formation of 6,7-dimethyl-8-ribityllumazine by condensation of 5-amino-6-(D-ribitylamino)uracil with 3,4-dihydroxy-2-butanone 4-phosphate. This is the penultimate step in the biosynthesis of riboflavin (By similarity).</text>
</comment>
<comment type="catalytic activity">
    <reaction>
        <text>(2S)-2-hydroxy-3-oxobutyl phosphate + 5-amino-6-(D-ribitylamino)uracil = 6,7-dimethyl-8-(1-D-ribityl)lumazine + phosphate + 2 H2O + H(+)</text>
        <dbReference type="Rhea" id="RHEA:26152"/>
        <dbReference type="ChEBI" id="CHEBI:15377"/>
        <dbReference type="ChEBI" id="CHEBI:15378"/>
        <dbReference type="ChEBI" id="CHEBI:15934"/>
        <dbReference type="ChEBI" id="CHEBI:43474"/>
        <dbReference type="ChEBI" id="CHEBI:58201"/>
        <dbReference type="ChEBI" id="CHEBI:58830"/>
        <dbReference type="EC" id="2.5.1.78"/>
    </reaction>
</comment>
<comment type="pathway">
    <text>Cofactor biosynthesis; riboflavin biosynthesis; riboflavin from 2-hydroxy-3-oxobutyl phosphate and 5-amino-6-(D-ribitylamino)uracil: step 1/2.</text>
</comment>
<comment type="subunit">
    <text evidence="1">Homopentamer.</text>
</comment>
<comment type="similarity">
    <text evidence="3">Belongs to the DMRL synthase family.</text>
</comment>
<gene>
    <name type="primary">ribH</name>
    <name type="ordered locus">MT1459</name>
</gene>
<organism>
    <name type="scientific">Mycobacterium tuberculosis (strain CDC 1551 / Oshkosh)</name>
    <dbReference type="NCBI Taxonomy" id="83331"/>
    <lineage>
        <taxon>Bacteria</taxon>
        <taxon>Bacillati</taxon>
        <taxon>Actinomycetota</taxon>
        <taxon>Actinomycetes</taxon>
        <taxon>Mycobacteriales</taxon>
        <taxon>Mycobacteriaceae</taxon>
        <taxon>Mycobacterium</taxon>
        <taxon>Mycobacterium tuberculosis complex</taxon>
    </lineage>
</organism>
<accession>P9WHE8</accession>
<accession>L0T874</accession>
<accession>P66034</accession>
<accession>P71685</accession>
<feature type="chain" id="PRO_0000428199" description="6,7-dimethyl-8-ribityllumazine synthase">
    <location>
        <begin position="1"/>
        <end position="160"/>
    </location>
</feature>
<feature type="active site" description="Proton donor" evidence="2">
    <location>
        <position position="89"/>
    </location>
</feature>
<feature type="binding site" evidence="1">
    <location>
        <position position="27"/>
    </location>
    <ligand>
        <name>5-amino-6-(D-ribitylamino)uracil</name>
        <dbReference type="ChEBI" id="CHEBI:15934"/>
    </ligand>
</feature>
<feature type="binding site" evidence="1">
    <location>
        <begin position="59"/>
        <end position="61"/>
    </location>
    <ligand>
        <name>5-amino-6-(D-ribitylamino)uracil</name>
        <dbReference type="ChEBI" id="CHEBI:15934"/>
    </ligand>
</feature>
<feature type="binding site" evidence="1">
    <location>
        <begin position="81"/>
        <end position="83"/>
    </location>
    <ligand>
        <name>5-amino-6-(D-ribitylamino)uracil</name>
        <dbReference type="ChEBI" id="CHEBI:15934"/>
    </ligand>
</feature>
<feature type="binding site" evidence="1">
    <location>
        <begin position="86"/>
        <end position="87"/>
    </location>
    <ligand>
        <name>(2S)-2-hydroxy-3-oxobutyl phosphate</name>
        <dbReference type="ChEBI" id="CHEBI:58830"/>
    </ligand>
</feature>
<feature type="binding site" evidence="1">
    <location>
        <position position="114"/>
    </location>
    <ligand>
        <name>5-amino-6-(D-ribitylamino)uracil</name>
        <dbReference type="ChEBI" id="CHEBI:15934"/>
    </ligand>
</feature>
<feature type="binding site" evidence="1">
    <location>
        <position position="128"/>
    </location>
    <ligand>
        <name>(2S)-2-hydroxy-3-oxobutyl phosphate</name>
        <dbReference type="ChEBI" id="CHEBI:58830"/>
    </ligand>
</feature>
<protein>
    <recommendedName>
        <fullName>6,7-dimethyl-8-ribityllumazine synthase</fullName>
        <shortName>DMRL synthase</shortName>
        <shortName>LS</shortName>
        <shortName>Lumazine synthase</shortName>
        <ecNumber>2.5.1.78</ecNumber>
    </recommendedName>
</protein>
<reference key="1">
    <citation type="journal article" date="2002" name="J. Bacteriol.">
        <title>Whole-genome comparison of Mycobacterium tuberculosis clinical and laboratory strains.</title>
        <authorList>
            <person name="Fleischmann R.D."/>
            <person name="Alland D."/>
            <person name="Eisen J.A."/>
            <person name="Carpenter L."/>
            <person name="White O."/>
            <person name="Peterson J.D."/>
            <person name="DeBoy R.T."/>
            <person name="Dodson R.J."/>
            <person name="Gwinn M.L."/>
            <person name="Haft D.H."/>
            <person name="Hickey E.K."/>
            <person name="Kolonay J.F."/>
            <person name="Nelson W.C."/>
            <person name="Umayam L.A."/>
            <person name="Ermolaeva M.D."/>
            <person name="Salzberg S.L."/>
            <person name="Delcher A."/>
            <person name="Utterback T.R."/>
            <person name="Weidman J.F."/>
            <person name="Khouri H.M."/>
            <person name="Gill J."/>
            <person name="Mikula A."/>
            <person name="Bishai W."/>
            <person name="Jacobs W.R. Jr."/>
            <person name="Venter J.C."/>
            <person name="Fraser C.M."/>
        </authorList>
    </citation>
    <scope>NUCLEOTIDE SEQUENCE [LARGE SCALE GENOMIC DNA]</scope>
    <source>
        <strain>CDC 1551 / Oshkosh</strain>
    </source>
</reference>
<dbReference type="EC" id="2.5.1.78"/>
<dbReference type="EMBL" id="AE000516">
    <property type="protein sequence ID" value="AAK45724.1"/>
    <property type="molecule type" value="Genomic_DNA"/>
</dbReference>
<dbReference type="PIR" id="E70902">
    <property type="entry name" value="E70902"/>
</dbReference>
<dbReference type="RefSeq" id="WP_003898872.1">
    <property type="nucleotide sequence ID" value="NZ_KK341227.1"/>
</dbReference>
<dbReference type="SMR" id="P9WHE8"/>
<dbReference type="KEGG" id="mtc:MT1459"/>
<dbReference type="PATRIC" id="fig|83331.31.peg.1568"/>
<dbReference type="HOGENOM" id="CLU_089358_1_2_11"/>
<dbReference type="UniPathway" id="UPA00275">
    <property type="reaction ID" value="UER00404"/>
</dbReference>
<dbReference type="Proteomes" id="UP000001020">
    <property type="component" value="Chromosome"/>
</dbReference>
<dbReference type="GO" id="GO:0005829">
    <property type="term" value="C:cytosol"/>
    <property type="evidence" value="ECO:0007669"/>
    <property type="project" value="TreeGrafter"/>
</dbReference>
<dbReference type="GO" id="GO:0009349">
    <property type="term" value="C:riboflavin synthase complex"/>
    <property type="evidence" value="ECO:0007669"/>
    <property type="project" value="InterPro"/>
</dbReference>
<dbReference type="GO" id="GO:0000906">
    <property type="term" value="F:6,7-dimethyl-8-ribityllumazine synthase activity"/>
    <property type="evidence" value="ECO:0007669"/>
    <property type="project" value="UniProtKB-UniRule"/>
</dbReference>
<dbReference type="GO" id="GO:0009231">
    <property type="term" value="P:riboflavin biosynthetic process"/>
    <property type="evidence" value="ECO:0007669"/>
    <property type="project" value="UniProtKB-UniRule"/>
</dbReference>
<dbReference type="CDD" id="cd09209">
    <property type="entry name" value="Lumazine_synthase-I"/>
    <property type="match status" value="1"/>
</dbReference>
<dbReference type="FunFam" id="3.40.50.960:FF:000002">
    <property type="entry name" value="6,7-dimethyl-8-ribityllumazine synthase"/>
    <property type="match status" value="1"/>
</dbReference>
<dbReference type="Gene3D" id="3.40.50.960">
    <property type="entry name" value="Lumazine/riboflavin synthase"/>
    <property type="match status" value="1"/>
</dbReference>
<dbReference type="HAMAP" id="MF_00178">
    <property type="entry name" value="Lumazine_synth"/>
    <property type="match status" value="1"/>
</dbReference>
<dbReference type="InterPro" id="IPR034964">
    <property type="entry name" value="LS"/>
</dbReference>
<dbReference type="InterPro" id="IPR002180">
    <property type="entry name" value="LS/RS"/>
</dbReference>
<dbReference type="InterPro" id="IPR036467">
    <property type="entry name" value="LS/RS_sf"/>
</dbReference>
<dbReference type="NCBIfam" id="TIGR00114">
    <property type="entry name" value="lumazine-synth"/>
    <property type="match status" value="1"/>
</dbReference>
<dbReference type="PANTHER" id="PTHR21058:SF0">
    <property type="entry name" value="6,7-DIMETHYL-8-RIBITYLLUMAZINE SYNTHASE"/>
    <property type="match status" value="1"/>
</dbReference>
<dbReference type="PANTHER" id="PTHR21058">
    <property type="entry name" value="6,7-DIMETHYL-8-RIBITYLLUMAZINE SYNTHASE DMRL SYNTHASE LUMAZINE SYNTHASE"/>
    <property type="match status" value="1"/>
</dbReference>
<dbReference type="Pfam" id="PF00885">
    <property type="entry name" value="DMRL_synthase"/>
    <property type="match status" value="1"/>
</dbReference>
<dbReference type="SUPFAM" id="SSF52121">
    <property type="entry name" value="Lumazine synthase"/>
    <property type="match status" value="1"/>
</dbReference>
<name>RISB_MYCTO</name>
<sequence length="160" mass="16371">MKGGAGVPDLPSLDASGVRLAIVASSWHGKICDALLDGARKVAAGCGLDDPTVVRVLGAIEIPVVAQELARNHDAVVALGVVIRGQTPHFDYVCDAVTQGLTRVSLDSSTPIANGVLTTNTEEQALDRAGLPTSAEDKGAQATVAALATALTLRELRAHS</sequence>
<keyword id="KW-1185">Reference proteome</keyword>
<keyword id="KW-0686">Riboflavin biosynthesis</keyword>
<keyword id="KW-0808">Transferase</keyword>
<evidence type="ECO:0000250" key="1"/>
<evidence type="ECO:0000255" key="2"/>
<evidence type="ECO:0000305" key="3"/>
<proteinExistence type="inferred from homology"/>